<name>EFTS_ECOLI</name>
<accession>P0A6P1</accession>
<accession>P02997</accession>
<organism>
    <name type="scientific">Escherichia coli (strain K12)</name>
    <dbReference type="NCBI Taxonomy" id="83333"/>
    <lineage>
        <taxon>Bacteria</taxon>
        <taxon>Pseudomonadati</taxon>
        <taxon>Pseudomonadota</taxon>
        <taxon>Gammaproteobacteria</taxon>
        <taxon>Enterobacterales</taxon>
        <taxon>Enterobacteriaceae</taxon>
        <taxon>Escherichia</taxon>
    </lineage>
</organism>
<protein>
    <recommendedName>
        <fullName evidence="1">Elongation factor Ts</fullName>
        <shortName evidence="1">EF-Ts</shortName>
    </recommendedName>
    <alternativeName>
        <fullName evidence="17">Bacteriophage Q beta RNA-directed RNA polymerase subunit IV</fullName>
    </alternativeName>
</protein>
<sequence length="283" mass="30423">MAEITASLVKELRERTGAGMMDCKKALTEANGDIELAIENMRKSGAIKAAKKAGNVAADGVIKTKIDGNYGIILEVNCQTDFVAKDAGFQAFADKVLDAAVAGKITDVEVLKAQFEEERVALVAKIGENINIRRVAALEGDVLGSYQHGARIGVLVAAKGADEELVKHIAMHVAASKPEFIKPEDVSAEVVEKEYQVQLDIAMQSGKPKEIAEKMVEGRMKKFTGEVSLTGQPFVMEPSKTVGQLLKEHNAEVTGFIRFEVGEGIEKVETDFAAEVAAMSKQS</sequence>
<feature type="initiator methionine" description="Removed" evidence="13 15 16">
    <location>
        <position position="1"/>
    </location>
</feature>
<feature type="chain" id="PRO_0000161117" description="Elongation factor Ts">
    <location>
        <begin position="2"/>
        <end position="283"/>
    </location>
</feature>
<feature type="region of interest" description="Involved in Mg(2+) ion dislocation from EF-Tu" evidence="1">
    <location>
        <begin position="80"/>
        <end position="83"/>
    </location>
</feature>
<feature type="mutagenesis site" description="No change in binding to EF-Tu and in promoting GDP exchange." evidence="14">
    <original>K</original>
    <variation>A</variation>
    <location>
        <position position="24"/>
    </location>
</feature>
<feature type="mutagenesis site" description="2 to 3-fold less active in promoting GDP exchange and slightly lower binding constant for interaction with EF-Tu." evidence="14">
    <original>D</original>
    <variation>A</variation>
    <location>
        <position position="81"/>
    </location>
</feature>
<feature type="mutagenesis site" description="2 to 3-fold less active in promoting GDP exchange and 6-fold less active in binding to EF-Tu." evidence="14">
    <original>F</original>
    <variation>A</variation>
    <location>
        <position position="82"/>
    </location>
</feature>
<feature type="mutagenesis site" description="At least 100-fold decrease in affinity between EF-Ts and EF-Tu and only small amount of GDP exchange activity." evidence="14">
    <original>H</original>
    <variation>A</variation>
    <location>
        <position position="148"/>
    </location>
</feature>
<feature type="mutagenesis site" description="Resistant to toxins CdiA-CT-EC869, CdiA-CT-NC101 and CdiA-CT-96.154, but not other CdiA toxins in growth competition experiments, in vitro prevents CdiA-CT-EC869 from digesting tRNA(GUG-Gln). Resistant to bacteriophage R17." evidence="8">
    <original>VSAEVVEKEYQVQLDIAMQSGKPKEIAEKMVEGRMKKFTG</original>
    <variation>EPGGEA</variation>
    <location>
        <begin position="186"/>
        <end position="225"/>
    </location>
</feature>
<feature type="mutagenesis site" description="Still associates with EF-Tu, no longer forms the Qbeta viral RNA polymerase complex." evidence="4">
    <location>
        <begin position="188"/>
        <end position="227"/>
    </location>
</feature>
<feature type="mutagenesis site" description="Resistant to toxin CdiA-CT-EC869, partially resistant to toxins CdiA-CT-NC101 and CdiA-CT-96.154, but not resistant to other CdiA toxins in growth competition experiments, in vitro prevents CdiA-CT-EC869 from digesting tRNA(GUG-Gln). Partially resistant to bacteriophage R17." evidence="8">
    <original>A</original>
    <variation>E</variation>
    <location>
        <position position="202"/>
    </location>
</feature>
<feature type="mutagenesis site" description="Resistant to toxin CdiA-CT-EC869, partially resistant to toxins CdiA-CT-NC101 and CdiA-CT-96.154, but not resistant to other CdiA toxins in growth competition experiments. Resistant to bacteriophage R17." evidence="8">
    <original>R</original>
    <variation>P</variation>
    <location>
        <position position="219"/>
    </location>
</feature>
<feature type="helix" evidence="19">
    <location>
        <begin position="6"/>
        <end position="16"/>
    </location>
</feature>
<feature type="helix" evidence="19">
    <location>
        <begin position="20"/>
        <end position="29"/>
    </location>
</feature>
<feature type="turn" evidence="19">
    <location>
        <begin position="30"/>
        <end position="32"/>
    </location>
</feature>
<feature type="helix" evidence="19">
    <location>
        <begin position="34"/>
        <end position="52"/>
    </location>
</feature>
<feature type="strand" evidence="19">
    <location>
        <begin position="59"/>
        <end position="67"/>
    </location>
</feature>
<feature type="strand" evidence="19">
    <location>
        <begin position="70"/>
        <end position="79"/>
    </location>
</feature>
<feature type="helix" evidence="19">
    <location>
        <begin position="81"/>
        <end position="85"/>
    </location>
</feature>
<feature type="helix" evidence="19">
    <location>
        <begin position="87"/>
        <end position="103"/>
    </location>
</feature>
<feature type="helix" evidence="19">
    <location>
        <begin position="108"/>
        <end position="126"/>
    </location>
</feature>
<feature type="strand" evidence="19">
    <location>
        <begin position="131"/>
        <end position="139"/>
    </location>
</feature>
<feature type="strand" evidence="19">
    <location>
        <begin position="141"/>
        <end position="148"/>
    </location>
</feature>
<feature type="turn" evidence="19">
    <location>
        <begin position="149"/>
        <end position="151"/>
    </location>
</feature>
<feature type="strand" evidence="19">
    <location>
        <begin position="152"/>
        <end position="160"/>
    </location>
</feature>
<feature type="helix" evidence="19">
    <location>
        <begin position="163"/>
        <end position="176"/>
    </location>
</feature>
<feature type="strand" evidence="19">
    <location>
        <begin position="179"/>
        <end position="182"/>
    </location>
</feature>
<feature type="helix" evidence="19">
    <location>
        <begin position="183"/>
        <end position="185"/>
    </location>
</feature>
<feature type="helix" evidence="19">
    <location>
        <begin position="188"/>
        <end position="204"/>
    </location>
</feature>
<feature type="helix" evidence="19">
    <location>
        <begin position="209"/>
        <end position="226"/>
    </location>
</feature>
<feature type="turn" evidence="19">
    <location>
        <begin position="229"/>
        <end position="231"/>
    </location>
</feature>
<feature type="strand" evidence="18">
    <location>
        <begin position="232"/>
        <end position="234"/>
    </location>
</feature>
<feature type="strand" evidence="18">
    <location>
        <begin position="237"/>
        <end position="241"/>
    </location>
</feature>
<feature type="helix" evidence="19">
    <location>
        <begin position="242"/>
        <end position="248"/>
    </location>
</feature>
<feature type="strand" evidence="19">
    <location>
        <begin position="252"/>
        <end position="260"/>
    </location>
</feature>
<feature type="turn" evidence="19">
    <location>
        <begin position="261"/>
        <end position="264"/>
    </location>
</feature>
<feature type="helix" evidence="19">
    <location>
        <begin position="272"/>
        <end position="279"/>
    </location>
</feature>
<keyword id="KW-0002">3D-structure</keyword>
<keyword id="KW-0963">Cytoplasm</keyword>
<keyword id="KW-0903">Direct protein sequencing</keyword>
<keyword id="KW-0251">Elongation factor</keyword>
<keyword id="KW-0648">Protein biosynthesis</keyword>
<keyword id="KW-1185">Reference proteome</keyword>
<comment type="function">
    <text evidence="1">Associates with the EF-Tu.GDP complex and induces the exchange of GDP to GTP. It remains bound to the aminoacyl-tRNA.EF-Tu.GTP complex up to the GTP hydrolysis stage on the ribosome.</text>
</comment>
<comment type="function">
    <text evidence="3 4 5 6 7 11">(Microbial infection) In case of infection by bacteriophage Qbeta (and related Leviviruses), part of the viral RNA-dependent RNA polymerase complex. With EF-Tu may provide a stabilizing scaffold for the beta (catalytic) subunit, implicated in the elongation step of viral RNA synthesis where it fixes EF-Tu in an open conformation.</text>
</comment>
<comment type="function">
    <text evidence="8 9">(Microbial infection) Promotes the tRNase activity of CdiA-CT from E.coli strain EC869 (CdiA-CT-EC869); required in vivo but less so in vitro. Probably loads charged tRNA onto EF-Tu, making more ternary GTP-EF-Tu-aa-tRNA complexes. The guanine nucleotide exchange factor capacity of this protein does not seem to be needed as no GTP hydrolysis occurs during tRNA cleavage. Also required in vivo for toxic activity of CdiA-CT from E.coli strains NC101 and CdiA-CT-96.154. CdiA-CT is the toxic component of a toxin-immunity protein module, which functions as a cellular contact-dependent growth inhibition (CDI) system. CDI modules allow bacteria to communicate with and inhibit the growth of closely related neighboring bacteria in a contact-dependent fashion (PubMed:28223500). EF-Ts interacts with at least 2 different toxic CT domains, the 2 toxins are different and degrade tRNA at different positions (PubMed:28223500, PubMed:28973472).</text>
</comment>
<comment type="function">
    <text evidence="8 9">(Microbial infection) Promotes the tRNase activity of CdiA-CT from E.coli strain NC101 (CdiA-CT-NC101); required in vivo and in vitro. Probably loads charged tRNA onto EF-Tu, making more ternary GTP-EF-Tu-aa-tRNA complexes. The guanine nucleotide exchange factor capacity of this protein does not seem to be needed as no GTP hydrolysis occurs during tRNA cleavage. CdiA-CT is the toxic component of a toxin-immunity protein module, which functions as a cellular contact-dependent growth inhibition (CDI) system. CDI modules allow bacteria to communicate with and inhibit the growth of closely related neighboring bacteria in a contact-dependent fashion (PubMed:28973472). EF-Ts interacts with at least 2 different toxic CT domains, the 2 toxins are different and degrade tRNA at different positions (PubMed:28223500, PubMed:28973472).</text>
</comment>
<comment type="subunit">
    <text evidence="12">Heterotetramer composed of two EF-Ts.EF-Tu dimer complexes.</text>
</comment>
<comment type="subunit">
    <text evidence="3 4 5 6 7 11">(Microbial infection) In case of infection by bacteriophage Qbeta, part of the viral RNA-dependent RNA polymerase complex, the other subunits are the viral replicase catalytic subunit (AC P14647), host ribosomal protein S1 and EF-Tu (PubMed:816798).</text>
</comment>
<comment type="interaction">
    <interactant intactId="EBI-301164">
        <id>P0A6P1</id>
    </interactant>
    <interactant intactId="EBI-301077">
        <id>P0CE47</id>
        <label>tufA</label>
    </interactant>
    <organismsDiffer>false</organismsDiffer>
    <experiments>12</experiments>
</comment>
<comment type="interaction">
    <interactant intactId="EBI-301164">
        <id>P0A6P1</id>
    </interactant>
    <interactant intactId="EBI-9010251">
        <id>P0CE48</id>
        <label>tufB</label>
    </interactant>
    <organismsDiffer>false</organismsDiffer>
    <experiments>3</experiments>
</comment>
<comment type="interaction">
    <interactant intactId="EBI-301164">
        <id>P0A6P1</id>
    </interactant>
    <interactant intactId="EBI-9010000">
        <id>P14647</id>
    </interactant>
    <organismsDiffer>true</organismsDiffer>
    <experiments>2</experiments>
</comment>
<comment type="subcellular location">
    <subcellularLocation>
        <location evidence="1">Cytoplasm</location>
    </subcellularLocation>
</comment>
<comment type="mass spectrometry" mass="30294.0" error="6.0" method="Electrospray" evidence="10"/>
<comment type="miscellaneous">
    <text evidence="2 4 5 6 7">In order to produce high amounts of bacteriophage Qbeta RNA polymerase catalytic core, a fusion protein consisting of tsf-tufB-replicase with a cleavable linker between tufB and the viral replicase subunit is frequently used.</text>
</comment>
<comment type="similarity">
    <text evidence="1">Belongs to the EF-Ts family.</text>
</comment>
<dbReference type="EMBL" id="V00343">
    <property type="protein sequence ID" value="CAA23632.1"/>
    <property type="molecule type" value="Genomic_DNA"/>
</dbReference>
<dbReference type="EMBL" id="D13334">
    <property type="protein sequence ID" value="BAA02597.1"/>
    <property type="molecule type" value="Genomic_DNA"/>
</dbReference>
<dbReference type="EMBL" id="U00096">
    <property type="protein sequence ID" value="AAC73281.1"/>
    <property type="molecule type" value="Genomic_DNA"/>
</dbReference>
<dbReference type="EMBL" id="AP009048">
    <property type="protein sequence ID" value="BAB96746.1"/>
    <property type="molecule type" value="Genomic_DNA"/>
</dbReference>
<dbReference type="EMBL" id="U70214">
    <property type="protein sequence ID" value="AAB08599.1"/>
    <property type="molecule type" value="Genomic_DNA"/>
</dbReference>
<dbReference type="PIR" id="A03525">
    <property type="entry name" value="EFECS"/>
</dbReference>
<dbReference type="RefSeq" id="NP_414712.1">
    <property type="nucleotide sequence ID" value="NC_000913.3"/>
</dbReference>
<dbReference type="RefSeq" id="WP_000818114.1">
    <property type="nucleotide sequence ID" value="NZ_STEB01000032.1"/>
</dbReference>
<dbReference type="PDB" id="1EFU">
    <property type="method" value="X-ray"/>
    <property type="resolution" value="2.50 A"/>
    <property type="chains" value="B/D=2-283"/>
</dbReference>
<dbReference type="PDB" id="3AGP">
    <property type="method" value="X-ray"/>
    <property type="resolution" value="2.80 A"/>
    <property type="chains" value="A=1-283"/>
</dbReference>
<dbReference type="PDB" id="3AGQ">
    <property type="method" value="X-ray"/>
    <property type="resolution" value="3.22 A"/>
    <property type="chains" value="A=1-283"/>
</dbReference>
<dbReference type="PDB" id="3AVT">
    <property type="method" value="X-ray"/>
    <property type="resolution" value="2.61 A"/>
    <property type="chains" value="A=1-283"/>
</dbReference>
<dbReference type="PDB" id="3AVU">
    <property type="method" value="X-ray"/>
    <property type="resolution" value="2.91 A"/>
    <property type="chains" value="A=1-283"/>
</dbReference>
<dbReference type="PDB" id="3AVV">
    <property type="method" value="X-ray"/>
    <property type="resolution" value="3.12 A"/>
    <property type="chains" value="A=1-283"/>
</dbReference>
<dbReference type="PDB" id="3AVW">
    <property type="method" value="X-ray"/>
    <property type="resolution" value="2.60 A"/>
    <property type="chains" value="A=1-283"/>
</dbReference>
<dbReference type="PDB" id="3AVX">
    <property type="method" value="X-ray"/>
    <property type="resolution" value="2.41 A"/>
    <property type="chains" value="A=1-283"/>
</dbReference>
<dbReference type="PDB" id="3AVY">
    <property type="method" value="X-ray"/>
    <property type="resolution" value="2.62 A"/>
    <property type="chains" value="A=1-283"/>
</dbReference>
<dbReference type="PDB" id="3MMP">
    <property type="method" value="X-ray"/>
    <property type="resolution" value="2.50 A"/>
    <property type="chains" value="A/C=1-283"/>
</dbReference>
<dbReference type="PDB" id="3VNU">
    <property type="method" value="X-ray"/>
    <property type="resolution" value="3.20 A"/>
    <property type="chains" value="A=1-283"/>
</dbReference>
<dbReference type="PDB" id="3VNV">
    <property type="method" value="X-ray"/>
    <property type="resolution" value="2.60 A"/>
    <property type="chains" value="A=1-283"/>
</dbReference>
<dbReference type="PDB" id="4FWT">
    <property type="method" value="X-ray"/>
    <property type="resolution" value="3.20 A"/>
    <property type="chains" value="A=1-283"/>
</dbReference>
<dbReference type="PDB" id="4PC3">
    <property type="method" value="X-ray"/>
    <property type="resolution" value="1.83 A"/>
    <property type="chains" value="C/D=2-283"/>
</dbReference>
<dbReference type="PDB" id="4PC7">
    <property type="method" value="X-ray"/>
    <property type="resolution" value="3.60 A"/>
    <property type="chains" value="C=2-283"/>
</dbReference>
<dbReference type="PDB" id="4Q7J">
    <property type="method" value="X-ray"/>
    <property type="resolution" value="2.90 A"/>
    <property type="chains" value="A/E=2-283"/>
</dbReference>
<dbReference type="PDB" id="4R71">
    <property type="method" value="X-ray"/>
    <property type="resolution" value="3.21 A"/>
    <property type="chains" value="A/C=1-283"/>
</dbReference>
<dbReference type="PDBsum" id="1EFU"/>
<dbReference type="PDBsum" id="3AGP"/>
<dbReference type="PDBsum" id="3AGQ"/>
<dbReference type="PDBsum" id="3AVT"/>
<dbReference type="PDBsum" id="3AVU"/>
<dbReference type="PDBsum" id="3AVV"/>
<dbReference type="PDBsum" id="3AVW"/>
<dbReference type="PDBsum" id="3AVX"/>
<dbReference type="PDBsum" id="3AVY"/>
<dbReference type="PDBsum" id="3MMP"/>
<dbReference type="PDBsum" id="3VNU"/>
<dbReference type="PDBsum" id="3VNV"/>
<dbReference type="PDBsum" id="4FWT"/>
<dbReference type="PDBsum" id="4PC3"/>
<dbReference type="PDBsum" id="4PC7"/>
<dbReference type="PDBsum" id="4Q7J"/>
<dbReference type="PDBsum" id="4R71"/>
<dbReference type="SMR" id="P0A6P1"/>
<dbReference type="BioGRID" id="4260795">
    <property type="interactions" value="58"/>
</dbReference>
<dbReference type="ComplexPortal" id="CPX-2853">
    <property type="entry name" value="Elongation Factor TU-TS, tufB variant"/>
</dbReference>
<dbReference type="ComplexPortal" id="CPX-6035">
    <property type="entry name" value="Elongation Factor TU-TS, tufA variant"/>
</dbReference>
<dbReference type="DIP" id="DIP-31835N"/>
<dbReference type="FunCoup" id="P0A6P1">
    <property type="interactions" value="841"/>
</dbReference>
<dbReference type="IntAct" id="P0A6P1">
    <property type="interactions" value="12"/>
</dbReference>
<dbReference type="STRING" id="511145.b0170"/>
<dbReference type="CarbonylDB" id="P0A6P1"/>
<dbReference type="jPOST" id="P0A6P1"/>
<dbReference type="PaxDb" id="511145-b0170"/>
<dbReference type="EnsemblBacteria" id="AAC73281">
    <property type="protein sequence ID" value="AAC73281"/>
    <property type="gene ID" value="b0170"/>
</dbReference>
<dbReference type="GeneID" id="93777255"/>
<dbReference type="GeneID" id="944866"/>
<dbReference type="KEGG" id="ecj:JW0165"/>
<dbReference type="KEGG" id="eco:b0170"/>
<dbReference type="KEGG" id="ecoc:C3026_00775"/>
<dbReference type="PATRIC" id="fig|1411691.4.peg.2110"/>
<dbReference type="EchoBASE" id="EB1026"/>
<dbReference type="eggNOG" id="COG0264">
    <property type="taxonomic scope" value="Bacteria"/>
</dbReference>
<dbReference type="HOGENOM" id="CLU_047155_0_2_6"/>
<dbReference type="InParanoid" id="P0A6P1"/>
<dbReference type="OMA" id="DAGMMDC"/>
<dbReference type="OrthoDB" id="9808348at2"/>
<dbReference type="PhylomeDB" id="P0A6P1"/>
<dbReference type="BioCyc" id="EcoCyc:EG11033-MONOMER"/>
<dbReference type="EvolutionaryTrace" id="P0A6P1"/>
<dbReference type="PRO" id="PR:P0A6P1"/>
<dbReference type="Proteomes" id="UP000000625">
    <property type="component" value="Chromosome"/>
</dbReference>
<dbReference type="GO" id="GO:0005737">
    <property type="term" value="C:cytoplasm"/>
    <property type="evidence" value="ECO:0007005"/>
    <property type="project" value="UniProtKB"/>
</dbReference>
<dbReference type="GO" id="GO:0005829">
    <property type="term" value="C:cytosol"/>
    <property type="evidence" value="ECO:0000314"/>
    <property type="project" value="EcoCyc"/>
</dbReference>
<dbReference type="GO" id="GO:0032045">
    <property type="term" value="C:guanyl-nucleotide exchange factor complex"/>
    <property type="evidence" value="ECO:0000353"/>
    <property type="project" value="ComplexPortal"/>
</dbReference>
<dbReference type="GO" id="GO:0016020">
    <property type="term" value="C:membrane"/>
    <property type="evidence" value="ECO:0007005"/>
    <property type="project" value="UniProtKB"/>
</dbReference>
<dbReference type="GO" id="GO:0005085">
    <property type="term" value="F:guanyl-nucleotide exchange factor activity"/>
    <property type="evidence" value="ECO:0000314"/>
    <property type="project" value="EcoCyc"/>
</dbReference>
<dbReference type="GO" id="GO:0003746">
    <property type="term" value="F:translation elongation factor activity"/>
    <property type="evidence" value="ECO:0000318"/>
    <property type="project" value="GO_Central"/>
</dbReference>
<dbReference type="GO" id="GO:0008270">
    <property type="term" value="F:zinc ion binding"/>
    <property type="evidence" value="ECO:0000314"/>
    <property type="project" value="EcoliWiki"/>
</dbReference>
<dbReference type="GO" id="GO:0006414">
    <property type="term" value="P:translational elongation"/>
    <property type="evidence" value="ECO:0000318"/>
    <property type="project" value="GO_Central"/>
</dbReference>
<dbReference type="CDD" id="cd14275">
    <property type="entry name" value="UBA_EF-Ts"/>
    <property type="match status" value="1"/>
</dbReference>
<dbReference type="FunFam" id="1.10.286.20:FF:000001">
    <property type="entry name" value="Elongation factor Ts"/>
    <property type="match status" value="1"/>
</dbReference>
<dbReference type="FunFam" id="1.10.8.10:FF:000001">
    <property type="entry name" value="Elongation factor Ts"/>
    <property type="match status" value="1"/>
</dbReference>
<dbReference type="FunFam" id="3.30.479.20:FF:000001">
    <property type="entry name" value="Elongation factor Ts"/>
    <property type="match status" value="1"/>
</dbReference>
<dbReference type="Gene3D" id="1.10.286.20">
    <property type="match status" value="1"/>
</dbReference>
<dbReference type="Gene3D" id="1.10.8.10">
    <property type="entry name" value="DNA helicase RuvA subunit, C-terminal domain"/>
    <property type="match status" value="1"/>
</dbReference>
<dbReference type="Gene3D" id="3.30.479.20">
    <property type="entry name" value="Elongation factor Ts, dimerisation domain"/>
    <property type="match status" value="2"/>
</dbReference>
<dbReference type="HAMAP" id="MF_00050">
    <property type="entry name" value="EF_Ts"/>
    <property type="match status" value="1"/>
</dbReference>
<dbReference type="InterPro" id="IPR036402">
    <property type="entry name" value="EF-Ts_dimer_sf"/>
</dbReference>
<dbReference type="InterPro" id="IPR001816">
    <property type="entry name" value="Transl_elong_EFTs/EF1B"/>
</dbReference>
<dbReference type="InterPro" id="IPR014039">
    <property type="entry name" value="Transl_elong_EFTs/EF1B_dimer"/>
</dbReference>
<dbReference type="InterPro" id="IPR018101">
    <property type="entry name" value="Transl_elong_Ts_CS"/>
</dbReference>
<dbReference type="InterPro" id="IPR009060">
    <property type="entry name" value="UBA-like_sf"/>
</dbReference>
<dbReference type="NCBIfam" id="TIGR00116">
    <property type="entry name" value="tsf"/>
    <property type="match status" value="1"/>
</dbReference>
<dbReference type="PANTHER" id="PTHR11741">
    <property type="entry name" value="ELONGATION FACTOR TS"/>
    <property type="match status" value="1"/>
</dbReference>
<dbReference type="PANTHER" id="PTHR11741:SF0">
    <property type="entry name" value="ELONGATION FACTOR TS, MITOCHONDRIAL"/>
    <property type="match status" value="1"/>
</dbReference>
<dbReference type="Pfam" id="PF00889">
    <property type="entry name" value="EF_TS"/>
    <property type="match status" value="1"/>
</dbReference>
<dbReference type="SUPFAM" id="SSF54713">
    <property type="entry name" value="Elongation factor Ts (EF-Ts), dimerisation domain"/>
    <property type="match status" value="2"/>
</dbReference>
<dbReference type="SUPFAM" id="SSF46934">
    <property type="entry name" value="UBA-like"/>
    <property type="match status" value="1"/>
</dbReference>
<dbReference type="PROSITE" id="PS01126">
    <property type="entry name" value="EF_TS_1"/>
    <property type="match status" value="1"/>
</dbReference>
<dbReference type="PROSITE" id="PS01127">
    <property type="entry name" value="EF_TS_2"/>
    <property type="match status" value="1"/>
</dbReference>
<gene>
    <name evidence="1" type="primary">tsf</name>
    <name type="ordered locus">b0170</name>
    <name type="ordered locus">JW0165</name>
</gene>
<proteinExistence type="evidence at protein level"/>
<reference key="1">
    <citation type="journal article" date="1981" name="Nucleic Acids Res.">
        <title>Organization and nucleotide sequence of a new ribosomal operon in Escherichia coli containing the genes for ribosomal protein S2 and elongation factor Ts.</title>
        <authorList>
            <person name="An G."/>
            <person name="Bendiak D.S."/>
            <person name="Mamelak L.A."/>
            <person name="Friesen J.D."/>
        </authorList>
    </citation>
    <scope>NUCLEOTIDE SEQUENCE [GENOMIC DNA]</scope>
</reference>
<reference key="2">
    <citation type="journal article" date="1994" name="Nucleic Acids Res.">
        <title>Systematic sequencing of the Escherichia coli genome: analysis of the 2.4-4.1 min (110,917-193,643 bp) region.</title>
        <authorList>
            <person name="Fujita N."/>
            <person name="Mori H."/>
            <person name="Yura T."/>
            <person name="Ishihama A."/>
        </authorList>
    </citation>
    <scope>NUCLEOTIDE SEQUENCE [LARGE SCALE GENOMIC DNA]</scope>
    <source>
        <strain>K12 / W3110 / ATCC 27325 / DSM 5911</strain>
    </source>
</reference>
<reference key="3">
    <citation type="submission" date="1996-02" db="EMBL/GenBank/DDBJ databases">
        <title>Systematic sequencing of the Escherichia coli genome: analysis of the 4.0 - 6.0 min (189,987 - 281,416bp) region.</title>
        <authorList>
            <person name="Takemoto K."/>
            <person name="Mori H."/>
            <person name="Murayama N."/>
            <person name="Kataoka K."/>
            <person name="Yano M."/>
            <person name="Itoh T."/>
            <person name="Yamamoto Y."/>
            <person name="Inokuchi H."/>
            <person name="Miki T."/>
            <person name="Hatada E."/>
            <person name="Fukuda R."/>
            <person name="Ichihara S."/>
            <person name="Mizuno T."/>
            <person name="Makino K."/>
            <person name="Nakata A."/>
            <person name="Yura T."/>
            <person name="Sampei G."/>
            <person name="Mizobuchi K."/>
        </authorList>
    </citation>
    <scope>NUCLEOTIDE SEQUENCE [LARGE SCALE GENOMIC DNA]</scope>
    <source>
        <strain>K12 / W3110 / ATCC 27325 / DSM 5911</strain>
    </source>
</reference>
<reference key="4">
    <citation type="submission" date="1997-01" db="EMBL/GenBank/DDBJ databases">
        <title>Sequence of minutes 4-25 of Escherichia coli.</title>
        <authorList>
            <person name="Chung E."/>
            <person name="Allen E."/>
            <person name="Araujo R."/>
            <person name="Aparicio A.M."/>
            <person name="Davis K."/>
            <person name="Duncan M."/>
            <person name="Federspiel N."/>
            <person name="Hyman R."/>
            <person name="Kalman S."/>
            <person name="Komp C."/>
            <person name="Kurdi O."/>
            <person name="Lew H."/>
            <person name="Lin D."/>
            <person name="Namath A."/>
            <person name="Oefner P."/>
            <person name="Roberts D."/>
            <person name="Schramm S."/>
            <person name="Davis R.W."/>
        </authorList>
    </citation>
    <scope>NUCLEOTIDE SEQUENCE [LARGE SCALE GENOMIC DNA]</scope>
    <source>
        <strain>K12 / MG1655 / ATCC 47076</strain>
    </source>
</reference>
<reference key="5">
    <citation type="journal article" date="1997" name="Science">
        <title>The complete genome sequence of Escherichia coli K-12.</title>
        <authorList>
            <person name="Blattner F.R."/>
            <person name="Plunkett G. III"/>
            <person name="Bloch C.A."/>
            <person name="Perna N.T."/>
            <person name="Burland V."/>
            <person name="Riley M."/>
            <person name="Collado-Vides J."/>
            <person name="Glasner J.D."/>
            <person name="Rode C.K."/>
            <person name="Mayhew G.F."/>
            <person name="Gregor J."/>
            <person name="Davis N.W."/>
            <person name="Kirkpatrick H.A."/>
            <person name="Goeden M.A."/>
            <person name="Rose D.J."/>
            <person name="Mau B."/>
            <person name="Shao Y."/>
        </authorList>
    </citation>
    <scope>NUCLEOTIDE SEQUENCE [LARGE SCALE GENOMIC DNA]</scope>
    <source>
        <strain>K12 / MG1655 / ATCC 47076</strain>
    </source>
</reference>
<reference key="6">
    <citation type="journal article" date="2006" name="Mol. Syst. Biol.">
        <title>Highly accurate genome sequences of Escherichia coli K-12 strains MG1655 and W3110.</title>
        <authorList>
            <person name="Hayashi K."/>
            <person name="Morooka N."/>
            <person name="Yamamoto Y."/>
            <person name="Fujita K."/>
            <person name="Isono K."/>
            <person name="Choi S."/>
            <person name="Ohtsubo E."/>
            <person name="Baba T."/>
            <person name="Wanner B.L."/>
            <person name="Mori H."/>
            <person name="Horiuchi T."/>
        </authorList>
    </citation>
    <scope>NUCLEOTIDE SEQUENCE [LARGE SCALE GENOMIC DNA]</scope>
    <source>
        <strain>K12 / W3110 / ATCC 27325 / DSM 5911</strain>
    </source>
</reference>
<reference key="7">
    <citation type="submission" date="1994-09" db="UniProtKB">
        <authorList>
            <person name="Pasquali C."/>
            <person name="Sanchez J.-C."/>
            <person name="Ravier F."/>
            <person name="Golaz O."/>
            <person name="Hughes G.J."/>
            <person name="Frutiger S."/>
            <person name="Paquet N."/>
            <person name="Wilkins M."/>
            <person name="Appel R.D."/>
            <person name="Bairoch A."/>
            <person name="Hochstrasser D.F."/>
        </authorList>
    </citation>
    <scope>PROTEIN SEQUENCE OF 2-14</scope>
    <source>
        <strain>K12 / W3110 / ATCC 27325 / DSM 5911</strain>
    </source>
</reference>
<reference key="8">
    <citation type="journal article" date="1997" name="Electrophoresis">
        <title>Comparing the predicted and observed properties of proteins encoded in the genome of Escherichia coli K-12.</title>
        <authorList>
            <person name="Link A.J."/>
            <person name="Robison K."/>
            <person name="Church G.M."/>
        </authorList>
    </citation>
    <scope>PROTEIN SEQUENCE OF 2-22</scope>
    <source>
        <strain>K12 / EMG2</strain>
    </source>
</reference>
<reference key="9">
    <citation type="journal article" date="1998" name="J. Mol. Biol.">
        <title>Protein identification with N and C-terminal sequence tags in proteome projects.</title>
        <authorList>
            <person name="Wilkins M.R."/>
            <person name="Gasteiger E."/>
            <person name="Tonella L."/>
            <person name="Ou K."/>
            <person name="Tyler M."/>
            <person name="Sanchez J.-C."/>
            <person name="Gooley A.A."/>
            <person name="Walsh B.J."/>
            <person name="Bairoch A."/>
            <person name="Appel R.D."/>
            <person name="Williams K.L."/>
            <person name="Hochstrasser D.F."/>
        </authorList>
    </citation>
    <scope>PROTEIN SEQUENCE OF 2-5</scope>
    <source>
        <strain>K12 / W3110 / ATCC 27325 / DSM 5911</strain>
    </source>
</reference>
<reference key="10">
    <citation type="journal article" date="1995" name="FEBS Lett.">
        <title>Analysis and crystallization of a 25 kDa C-terminal fragment of cloned elongation factor Ts from Escherichia coli.</title>
        <authorList>
            <person name="Boegestrand S."/>
            <person name="Wiborg O."/>
            <person name="Thirup S."/>
            <person name="Nyborg J."/>
        </authorList>
    </citation>
    <scope>PROTEIN SEQUENCE OF 52-56</scope>
    <scope>MASS SPECTROMETRY</scope>
</reference>
<reference key="11">
    <citation type="journal article" date="1992" name="J. Bacteriol.">
        <title>Identification and characterization of the smbA gene, a suppressor of the mukB null mutant of Escherichia coli.</title>
        <authorList>
            <person name="Yamanaka K."/>
            <person name="Ogura T."/>
            <person name="Niki H."/>
            <person name="Hiraga S."/>
        </authorList>
    </citation>
    <scope>NUCLEOTIDE SEQUENCE [GENOMIC DNA] OF 179-283</scope>
</reference>
<reference key="12">
    <citation type="journal article" date="1989" name="J. Bacteriol.">
        <title>Localization of the ribosome-releasing factor gene in the Escherichia coli chromosome.</title>
        <authorList>
            <person name="Ichikawa S."/>
            <person name="Ryoji M."/>
            <person name="Siegfried Z."/>
            <person name="Kaji A."/>
        </authorList>
    </citation>
    <scope>NUCLEOTIDE SEQUENCE [GENOMIC DNA] OF 199-275</scope>
</reference>
<reference key="13">
    <citation type="journal article" date="1976" name="J. Biol. Chem.">
        <title>Immunochemical analysis of the functions of the subunits of phage Qbeta ribonucleic acid replicase.</title>
        <authorList>
            <person name="Carmichael G.G."/>
            <person name="Landers T.A."/>
            <person name="Weber K."/>
        </authorList>
    </citation>
    <scope>FUNCTION IN VIRAL RNA REPLICATION (MICROBIAL INFECTION)</scope>
    <scope>SUBUNIT (MICROBIAL INFECTION)</scope>
</reference>
<reference key="14">
    <citation type="journal article" date="1997" name="Electrophoresis">
        <title>Escherichia coli proteome analysis using the gene-protein database.</title>
        <authorList>
            <person name="VanBogelen R.A."/>
            <person name="Abshire K.Z."/>
            <person name="Moldover B."/>
            <person name="Olson E.R."/>
            <person name="Neidhardt F.C."/>
        </authorList>
    </citation>
    <scope>IDENTIFICATION BY 2D-GEL</scope>
</reference>
<reference key="15">
    <citation type="journal article" date="1996" name="Nature">
        <title>The structure of the Escherichia coli EF-Tu.EF-Ts complex at 2.5-A resolution.</title>
        <authorList>
            <person name="Kawashima T."/>
            <person name="Berthet-Colominas C."/>
            <person name="Wulff M."/>
            <person name="Cusack S."/>
            <person name="Leberman R."/>
        </authorList>
    </citation>
    <scope>X-RAY CRYSTALLOGRAPHY (2.5 ANGSTROMS) OF COMPLEX WITH EF-TU</scope>
    <scope>SUBUNIT</scope>
</reference>
<reference key="16">
    <citation type="journal article" date="1998" name="J. Biol. Chem.">
        <title>Mutational analysis of the roles of residues in Escherichia coli elongation factor Ts in the interaction with elongation factor Tu.</title>
        <authorList>
            <person name="Zhang Y."/>
            <person name="Yu N.-J."/>
            <person name="Spremulli L.L."/>
        </authorList>
    </citation>
    <scope>MUTAGENESIS OF LYS-24; ASP-81; PHE-82 AND HIS-148</scope>
</reference>
<reference key="17">
    <citation type="journal article" date="2006" name="J. Biosci. Bioeng.">
        <title>Functional Qbeta replicase genetically fusing essential subunits EF-Ts and EF-Tu with beta-subunit.</title>
        <authorList>
            <person name="Kita H."/>
            <person name="Cho J."/>
            <person name="Matsuura T."/>
            <person name="Nakaishi T."/>
            <person name="Taniguchi I."/>
            <person name="Ichikawa T."/>
            <person name="Shima Y."/>
            <person name="Urabe I."/>
            <person name="Yomo T."/>
        </authorList>
    </citation>
    <scope>CONSTRUCT TO PRODUCE QBETA VIRAL CATALYTIC CORE</scope>
    <source>
        <strain>A/lambda</strain>
    </source>
</reference>
<reference key="18">
    <citation type="journal article" date="2017" name="Proc. Natl. Acad. Sci. U.S.A.">
        <title>Activation of contact-dependent antibacterial tRNase toxins by translation elongation factors.</title>
        <authorList>
            <person name="Jones A.M."/>
            <person name="Garza-Sanchez F."/>
            <person name="So J."/>
            <person name="Hayes C.S."/>
            <person name="Low D.A."/>
        </authorList>
    </citation>
    <scope>FUNCTION IN CDI (MICROBIAL INFECTION)</scope>
    <scope>MUTAGENESIS OF 186-VAL--GLY-225; ALA-202 AND ARG-219</scope>
    <source>
        <strain>K12 / MG1655 / ATCC 47076</strain>
    </source>
</reference>
<reference key="19">
    <citation type="journal article" date="2017" name="Nucleic Acids Res.">
        <title>Structure of a novel antibacterial toxin that exploits elongation factor Tu to cleave specific transfer RNAs.</title>
        <authorList>
            <person name="Michalska K."/>
            <person name="Gucinski G.C."/>
            <person name="Garza-Sanchez F."/>
            <person name="Johnson P.M."/>
            <person name="Stols L.M."/>
            <person name="Eschenfeldt W.H."/>
            <person name="Babnigg G."/>
            <person name="Low D.A."/>
            <person name="Goulding C.W."/>
            <person name="Joachimiak A."/>
            <person name="Hayes C.S."/>
        </authorList>
    </citation>
    <scope>FUNCTION IN CDI (MICROBIAL INFECTION)</scope>
</reference>
<reference key="20">
    <citation type="journal article" date="2010" name="Proc. Natl. Acad. Sci. U.S.A.">
        <title>Structure of the Qbeta replicase, an RNA-dependent RNA polymerase consisting of viral and host proteins.</title>
        <authorList>
            <person name="Kidmose R.T."/>
            <person name="Vasiliev N.N."/>
            <person name="Chetverin A.B."/>
            <person name="Andersen G.R."/>
            <person name="Knudsen C.R."/>
        </authorList>
    </citation>
    <scope>X-RAY CRYSTALLOGRAPHY (2.50 ANGSTROMS) IN QBETA VIRUS RNA POLYMERASE CATALYTIC CORE</scope>
    <scope>FUNCTION IN VIRAL RNA REPLICATION (MICROBIAL INFECTION)</scope>
    <scope>SUBUNIT</scope>
</reference>
<reference key="21">
    <citation type="journal article" date="2010" name="Proc. Natl. Acad. Sci. U.S.A.">
        <title>Assembly of Q{beta} viral RNA polymerase with host translational elongation factors EF-Tu and -Ts.</title>
        <authorList>
            <person name="Takeshita D."/>
            <person name="Tomita K."/>
        </authorList>
    </citation>
    <scope>X-RAY CRYSTALLOGRAPHY (2.80 ANGSTROMS) IN QBETA VIRUS RNA POLYMERASE CATALYTIC CORE</scope>
    <scope>FUNCTION IN VIRAL RNA REPLICATION (MICROBIAL INFECTION)</scope>
    <scope>SUBUNIT</scope>
    <scope>MUTAGENESIS OF 188-ALA--VAL-227</scope>
</reference>
<reference key="22">
    <citation type="journal article" date="2012" name="Nat. Struct. Mol. Biol.">
        <title>Molecular basis for RNA polymerization by Qbeta replicase.</title>
        <authorList>
            <person name="Takeshita D."/>
            <person name="Tomita K."/>
        </authorList>
    </citation>
    <scope>X-RAY CRYSTALLOGRAPHY (2.41 ANGSTROMS) IN QBETA VIRUS RNA POLYMERASE CATALYTIC CORE</scope>
    <scope>FUNCTION IN VIRAL RNA REPLICATION (MICROBIAL INFECTION)</scope>
    <scope>SUBUNIT</scope>
</reference>
<reference key="23">
    <citation type="journal article" date="2012" name="Structure">
        <title>Mechanism for template-independent terminal adenylation activity of Qbeta replicase.</title>
        <authorList>
            <person name="Takeshita D."/>
            <person name="Yamashita S."/>
            <person name="Tomita K."/>
        </authorList>
    </citation>
    <scope>X-RAY CRYSTALLOGRAPHY (2.60 ANGSTROMS) IN QBETA VIRUS RNA POLYMERASE CATALYTIC CORE</scope>
    <scope>FUNCTION IN VIRAL RNA REPLICATION (MICROBIAL INFECTION)</scope>
    <scope>SUBUNIT</scope>
</reference>
<reference key="24">
    <citation type="journal article" date="2014" name="Nucleic Acids Res.">
        <title>Molecular insights into replication initiation by Qbeta replicase using ribosomal protein S1.</title>
        <authorList>
            <person name="Takeshita D."/>
            <person name="Yamashita S."/>
            <person name="Tomita K."/>
        </authorList>
    </citation>
    <scope>X-RAY CRYSTALLOGRAPHY (2.90 ANGSTROMS) IN QBETA VIRUS RNA POLYMERASE</scope>
    <scope>FUNCTION IN VIRAL RNA REPLICATION (MICROBIAL INFECTION)</scope>
    <scope>SUBUNIT</scope>
    <source>
        <strain>K12 / W3110 / ATCC 27325 / DSM 5911</strain>
    </source>
</reference>
<evidence type="ECO:0000255" key="1">
    <source>
        <dbReference type="HAMAP-Rule" id="MF_00050"/>
    </source>
</evidence>
<evidence type="ECO:0000269" key="2">
    <source>
    </source>
</evidence>
<evidence type="ECO:0000269" key="3">
    <source>
    </source>
</evidence>
<evidence type="ECO:0000269" key="4">
    <source>
    </source>
</evidence>
<evidence type="ECO:0000269" key="5">
    <source>
    </source>
</evidence>
<evidence type="ECO:0000269" key="6">
    <source>
    </source>
</evidence>
<evidence type="ECO:0000269" key="7">
    <source>
    </source>
</evidence>
<evidence type="ECO:0000269" key="8">
    <source>
    </source>
</evidence>
<evidence type="ECO:0000269" key="9">
    <source>
    </source>
</evidence>
<evidence type="ECO:0000269" key="10">
    <source>
    </source>
</evidence>
<evidence type="ECO:0000269" key="11">
    <source>
    </source>
</evidence>
<evidence type="ECO:0000269" key="12">
    <source>
    </source>
</evidence>
<evidence type="ECO:0000269" key="13">
    <source>
    </source>
</evidence>
<evidence type="ECO:0000269" key="14">
    <source>
    </source>
</evidence>
<evidence type="ECO:0000269" key="15">
    <source>
    </source>
</evidence>
<evidence type="ECO:0000269" key="16">
    <source ref="7"/>
</evidence>
<evidence type="ECO:0000303" key="17">
    <source>
    </source>
</evidence>
<evidence type="ECO:0007829" key="18">
    <source>
        <dbReference type="PDB" id="1EFU"/>
    </source>
</evidence>
<evidence type="ECO:0007829" key="19">
    <source>
        <dbReference type="PDB" id="4PC3"/>
    </source>
</evidence>